<keyword id="KW-0119">Carbohydrate metabolism</keyword>
<keyword id="KW-0136">Cellulose degradation</keyword>
<keyword id="KW-0325">Glycoprotein</keyword>
<keyword id="KW-0326">Glycosidase</keyword>
<keyword id="KW-0378">Hydrolase</keyword>
<keyword id="KW-0624">Polysaccharide degradation</keyword>
<keyword id="KW-1185">Reference proteome</keyword>
<keyword id="KW-0964">Secreted</keyword>
<keyword id="KW-0732">Signal</keyword>
<organism>
    <name type="scientific">Aspergillus terreus (strain NIH 2624 / FGSC A1156)</name>
    <dbReference type="NCBI Taxonomy" id="341663"/>
    <lineage>
        <taxon>Eukaryota</taxon>
        <taxon>Fungi</taxon>
        <taxon>Dikarya</taxon>
        <taxon>Ascomycota</taxon>
        <taxon>Pezizomycotina</taxon>
        <taxon>Eurotiomycetes</taxon>
        <taxon>Eurotiomycetidae</taxon>
        <taxon>Eurotiales</taxon>
        <taxon>Aspergillaceae</taxon>
        <taxon>Aspergillus</taxon>
        <taxon>Aspergillus subgen. Circumdati</taxon>
    </lineage>
</organism>
<evidence type="ECO:0000250" key="1"/>
<evidence type="ECO:0000255" key="2"/>
<evidence type="ECO:0000305" key="3"/>
<accession>Q0CEF3</accession>
<proteinExistence type="inferred from homology"/>
<feature type="signal peptide" evidence="2">
    <location>
        <begin position="1"/>
        <end position="21"/>
    </location>
</feature>
<feature type="chain" id="PRO_0000394901" description="Probable beta-glucosidase L">
    <location>
        <begin position="22"/>
        <end position="736"/>
    </location>
</feature>
<feature type="active site" evidence="1">
    <location>
        <position position="252"/>
    </location>
</feature>
<feature type="glycosylation site" description="N-linked (GlcNAc...) asparagine" evidence="2">
    <location>
        <position position="224"/>
    </location>
</feature>
<feature type="glycosylation site" description="N-linked (GlcNAc...) asparagine" evidence="2">
    <location>
        <position position="295"/>
    </location>
</feature>
<feature type="glycosylation site" description="N-linked (GlcNAc...) asparagine" evidence="2">
    <location>
        <position position="363"/>
    </location>
</feature>
<feature type="glycosylation site" description="N-linked (GlcNAc...) asparagine" evidence="2">
    <location>
        <position position="429"/>
    </location>
</feature>
<feature type="glycosylation site" description="N-linked (GlcNAc...) asparagine" evidence="2">
    <location>
        <position position="607"/>
    </location>
</feature>
<protein>
    <recommendedName>
        <fullName>Probable beta-glucosidase L</fullName>
        <ecNumber>3.2.1.21</ecNumber>
    </recommendedName>
    <alternativeName>
        <fullName>Beta-D-glucoside glucohydrolase L</fullName>
    </alternativeName>
    <alternativeName>
        <fullName>Cellobiase L</fullName>
    </alternativeName>
    <alternativeName>
        <fullName>Gentiobiase L</fullName>
    </alternativeName>
</protein>
<name>BGLL_ASPTN</name>
<reference key="1">
    <citation type="submission" date="2005-09" db="EMBL/GenBank/DDBJ databases">
        <title>Annotation of the Aspergillus terreus NIH2624 genome.</title>
        <authorList>
            <person name="Birren B.W."/>
            <person name="Lander E.S."/>
            <person name="Galagan J.E."/>
            <person name="Nusbaum C."/>
            <person name="Devon K."/>
            <person name="Henn M."/>
            <person name="Ma L.-J."/>
            <person name="Jaffe D.B."/>
            <person name="Butler J."/>
            <person name="Alvarez P."/>
            <person name="Gnerre S."/>
            <person name="Grabherr M."/>
            <person name="Kleber M."/>
            <person name="Mauceli E.W."/>
            <person name="Brockman W."/>
            <person name="Rounsley S."/>
            <person name="Young S.K."/>
            <person name="LaButti K."/>
            <person name="Pushparaj V."/>
            <person name="DeCaprio D."/>
            <person name="Crawford M."/>
            <person name="Koehrsen M."/>
            <person name="Engels R."/>
            <person name="Montgomery P."/>
            <person name="Pearson M."/>
            <person name="Howarth C."/>
            <person name="Larson L."/>
            <person name="Luoma S."/>
            <person name="White J."/>
            <person name="Alvarado L."/>
            <person name="Kodira C.D."/>
            <person name="Zeng Q."/>
            <person name="Oleary S."/>
            <person name="Yandava C."/>
            <person name="Denning D.W."/>
            <person name="Nierman W.C."/>
            <person name="Milne T."/>
            <person name="Madden K."/>
        </authorList>
    </citation>
    <scope>NUCLEOTIDE SEQUENCE [LARGE SCALE GENOMIC DNA]</scope>
    <source>
        <strain>NIH 2624 / FGSC A1156</strain>
    </source>
</reference>
<comment type="function">
    <text evidence="1">Beta-glucosidases are one of a number of cellulolytic enzymes involved in the degradation of cellulosic biomass. Catalyzes the last step releasing glucose from the inhibitory cellobiose (By similarity).</text>
</comment>
<comment type="catalytic activity">
    <reaction>
        <text>Hydrolysis of terminal, non-reducing beta-D-glucosyl residues with release of beta-D-glucose.</text>
        <dbReference type="EC" id="3.2.1.21"/>
    </reaction>
</comment>
<comment type="pathway">
    <text>Glycan metabolism; cellulose degradation.</text>
</comment>
<comment type="subcellular location">
    <subcellularLocation>
        <location evidence="1">Secreted</location>
    </subcellularLocation>
</comment>
<comment type="similarity">
    <text evidence="3">Belongs to the glycosyl hydrolase 3 family.</text>
</comment>
<gene>
    <name type="primary">bglL</name>
    <name type="ORF">ATEG_07931</name>
</gene>
<sequence length="736" mass="77665">MNYRVPSLKATALAMAALTQALTTWDAAYEKALADLASLTQSEKVGVVSGITWEGGPCVGNTYAPESIAYPSLCLQDGPLGIRFANPVTAFPAGINAGATWDRELLRARGAAMGEEAKGLGVHVQLAPVAGALGKIPSAGRNWEGFTSDPYLSGIAMAETIHGMQGSGVQACAKHYILNEQEHSRETISSNVDDRTMHEVYLWPFYDAVKANVASVMCSYNKINGTWACENEGILDTLLKQELGFRGYVMSDWNAQHSTVASANTGLDMTMPGSDFSQPPGSIYWNENLAEAVANGSVPQARVDDMVTRILAAWYLLEQDQGYPAVAFDSRNGGKASVDVTADHADIARTVARDSIVLLKNSNNTLPLRNPSSIAVVGSDAIVNPDGPNACTDRGCNVGTLAQGWGSGTAEFPYLVAPLDAIQERSSGNGTKVVTSTTDDATAGADAAASADIAIVFISSDSGEGYITVEGHQGDRNNLDPWHGGNDLVKAVAAVNKKTIVVVHSTGPVVLETILAQPNVVAVVWAGIPGQESGNALADVLYGDVSPSGKLPYTIGKSEADYGTTWVANGADDDFPEGLFIDYRHFDKNEIEPRYEFGFGLSYTRFNFSNLAINIDATSGPTSGAVDVGGAADLYDSVGTISATVTNVGGVSGAEVAQLYIGFPSSAPETPPKQLRGFQKLPLAGGADGVAEFELTRRDISYWDVGQQKWVVPEGSFQVYVGASSRDIRLDGSFTV</sequence>
<dbReference type="EC" id="3.2.1.21"/>
<dbReference type="EMBL" id="CH476604">
    <property type="protein sequence ID" value="EAU32193.1"/>
    <property type="molecule type" value="Genomic_DNA"/>
</dbReference>
<dbReference type="RefSeq" id="XP_001216552.1">
    <property type="nucleotide sequence ID" value="XM_001216552.1"/>
</dbReference>
<dbReference type="SMR" id="Q0CEF3"/>
<dbReference type="STRING" id="341663.Q0CEF3"/>
<dbReference type="CAZy" id="GH3">
    <property type="family name" value="Glycoside Hydrolase Family 3"/>
</dbReference>
<dbReference type="GlyCosmos" id="Q0CEF3">
    <property type="glycosylation" value="5 sites, No reported glycans"/>
</dbReference>
<dbReference type="EnsemblFungi" id="EAU32193">
    <property type="protein sequence ID" value="EAU32193"/>
    <property type="gene ID" value="ATEG_07931"/>
</dbReference>
<dbReference type="GeneID" id="4322590"/>
<dbReference type="VEuPathDB" id="FungiDB:ATEG_07931"/>
<dbReference type="eggNOG" id="ENOG502QR4D">
    <property type="taxonomic scope" value="Eukaryota"/>
</dbReference>
<dbReference type="HOGENOM" id="CLU_004542_2_3_1"/>
<dbReference type="OMA" id="NDMFAHG"/>
<dbReference type="OrthoDB" id="416222at2759"/>
<dbReference type="UniPathway" id="UPA00696"/>
<dbReference type="Proteomes" id="UP000007963">
    <property type="component" value="Unassembled WGS sequence"/>
</dbReference>
<dbReference type="GO" id="GO:0005576">
    <property type="term" value="C:extracellular region"/>
    <property type="evidence" value="ECO:0007669"/>
    <property type="project" value="UniProtKB-SubCell"/>
</dbReference>
<dbReference type="GO" id="GO:0008422">
    <property type="term" value="F:beta-glucosidase activity"/>
    <property type="evidence" value="ECO:0007669"/>
    <property type="project" value="UniProtKB-EC"/>
</dbReference>
<dbReference type="GO" id="GO:0030245">
    <property type="term" value="P:cellulose catabolic process"/>
    <property type="evidence" value="ECO:0007669"/>
    <property type="project" value="UniProtKB-UniPathway"/>
</dbReference>
<dbReference type="FunFam" id="2.60.40.10:FF:000757">
    <property type="entry name" value="Beta-glucosidase G"/>
    <property type="match status" value="1"/>
</dbReference>
<dbReference type="FunFam" id="3.20.20.300:FF:000002">
    <property type="entry name" value="Probable beta-glucosidase"/>
    <property type="match status" value="1"/>
</dbReference>
<dbReference type="FunFam" id="3.40.50.1700:FF:000003">
    <property type="entry name" value="Probable beta-glucosidase"/>
    <property type="match status" value="1"/>
</dbReference>
<dbReference type="Gene3D" id="3.40.50.1700">
    <property type="entry name" value="Glycoside hydrolase family 3 C-terminal domain"/>
    <property type="match status" value="1"/>
</dbReference>
<dbReference type="Gene3D" id="3.20.20.300">
    <property type="entry name" value="Glycoside hydrolase, family 3, N-terminal domain"/>
    <property type="match status" value="1"/>
</dbReference>
<dbReference type="Gene3D" id="2.60.40.10">
    <property type="entry name" value="Immunoglobulins"/>
    <property type="match status" value="1"/>
</dbReference>
<dbReference type="InterPro" id="IPR050288">
    <property type="entry name" value="Cellulose_deg_GH3"/>
</dbReference>
<dbReference type="InterPro" id="IPR026891">
    <property type="entry name" value="Fn3-like"/>
</dbReference>
<dbReference type="InterPro" id="IPR002772">
    <property type="entry name" value="Glyco_hydro_3_C"/>
</dbReference>
<dbReference type="InterPro" id="IPR036881">
    <property type="entry name" value="Glyco_hydro_3_C_sf"/>
</dbReference>
<dbReference type="InterPro" id="IPR001764">
    <property type="entry name" value="Glyco_hydro_3_N"/>
</dbReference>
<dbReference type="InterPro" id="IPR036962">
    <property type="entry name" value="Glyco_hydro_3_N_sf"/>
</dbReference>
<dbReference type="InterPro" id="IPR017853">
    <property type="entry name" value="Glycoside_hydrolase_SF"/>
</dbReference>
<dbReference type="InterPro" id="IPR013783">
    <property type="entry name" value="Ig-like_fold"/>
</dbReference>
<dbReference type="PANTHER" id="PTHR42715">
    <property type="entry name" value="BETA-GLUCOSIDASE"/>
    <property type="match status" value="1"/>
</dbReference>
<dbReference type="PANTHER" id="PTHR42715:SF28">
    <property type="entry name" value="BETA-GLUCOSIDASE L-RELATED"/>
    <property type="match status" value="1"/>
</dbReference>
<dbReference type="Pfam" id="PF14310">
    <property type="entry name" value="Fn3-like"/>
    <property type="match status" value="1"/>
</dbReference>
<dbReference type="Pfam" id="PF00933">
    <property type="entry name" value="Glyco_hydro_3"/>
    <property type="match status" value="1"/>
</dbReference>
<dbReference type="Pfam" id="PF01915">
    <property type="entry name" value="Glyco_hydro_3_C"/>
    <property type="match status" value="1"/>
</dbReference>
<dbReference type="PRINTS" id="PR00133">
    <property type="entry name" value="GLHYDRLASE3"/>
</dbReference>
<dbReference type="SMART" id="SM01217">
    <property type="entry name" value="Fn3_like"/>
    <property type="match status" value="1"/>
</dbReference>
<dbReference type="SUPFAM" id="SSF51445">
    <property type="entry name" value="(Trans)glycosidases"/>
    <property type="match status" value="1"/>
</dbReference>
<dbReference type="SUPFAM" id="SSF52279">
    <property type="entry name" value="Beta-D-glucan exohydrolase, C-terminal domain"/>
    <property type="match status" value="1"/>
</dbReference>